<name>SELO_FLAJ1</name>
<gene>
    <name evidence="1" type="primary">ydiU</name>
    <name evidence="1" type="synonym">selO</name>
    <name type="ordered locus">Fjoh_2793</name>
</gene>
<feature type="chain" id="PRO_1000083131" description="Protein nucleotidyltransferase YdiU">
    <location>
        <begin position="1"/>
        <end position="522"/>
    </location>
</feature>
<feature type="active site" description="Proton acceptor" evidence="1">
    <location>
        <position position="270"/>
    </location>
</feature>
<feature type="binding site" evidence="1">
    <location>
        <position position="101"/>
    </location>
    <ligand>
        <name>ATP</name>
        <dbReference type="ChEBI" id="CHEBI:30616"/>
    </ligand>
</feature>
<feature type="binding site" evidence="1">
    <location>
        <position position="103"/>
    </location>
    <ligand>
        <name>ATP</name>
        <dbReference type="ChEBI" id="CHEBI:30616"/>
    </ligand>
</feature>
<feature type="binding site" evidence="1">
    <location>
        <position position="104"/>
    </location>
    <ligand>
        <name>ATP</name>
        <dbReference type="ChEBI" id="CHEBI:30616"/>
    </ligand>
</feature>
<feature type="binding site" evidence="1">
    <location>
        <position position="123"/>
    </location>
    <ligand>
        <name>ATP</name>
        <dbReference type="ChEBI" id="CHEBI:30616"/>
    </ligand>
</feature>
<feature type="binding site" evidence="1">
    <location>
        <position position="135"/>
    </location>
    <ligand>
        <name>ATP</name>
        <dbReference type="ChEBI" id="CHEBI:30616"/>
    </ligand>
</feature>
<feature type="binding site" evidence="1">
    <location>
        <position position="136"/>
    </location>
    <ligand>
        <name>ATP</name>
        <dbReference type="ChEBI" id="CHEBI:30616"/>
    </ligand>
</feature>
<feature type="binding site" evidence="1">
    <location>
        <position position="193"/>
    </location>
    <ligand>
        <name>ATP</name>
        <dbReference type="ChEBI" id="CHEBI:30616"/>
    </ligand>
</feature>
<feature type="binding site" evidence="1">
    <location>
        <position position="200"/>
    </location>
    <ligand>
        <name>ATP</name>
        <dbReference type="ChEBI" id="CHEBI:30616"/>
    </ligand>
</feature>
<feature type="binding site" evidence="1">
    <location>
        <position position="271"/>
    </location>
    <ligand>
        <name>Mg(2+)</name>
        <dbReference type="ChEBI" id="CHEBI:18420"/>
    </ligand>
</feature>
<feature type="binding site" evidence="1">
    <location>
        <position position="280"/>
    </location>
    <ligand>
        <name>ATP</name>
        <dbReference type="ChEBI" id="CHEBI:30616"/>
    </ligand>
</feature>
<feature type="binding site" evidence="1">
    <location>
        <position position="280"/>
    </location>
    <ligand>
        <name>Mg(2+)</name>
        <dbReference type="ChEBI" id="CHEBI:18420"/>
    </ligand>
</feature>
<evidence type="ECO:0000255" key="1">
    <source>
        <dbReference type="HAMAP-Rule" id="MF_00692"/>
    </source>
</evidence>
<accession>A5FG48</accession>
<organism>
    <name type="scientific">Flavobacterium johnsoniae (strain ATCC 17061 / DSM 2064 / JCM 8514 / BCRC 14874 / CCUG 350202 / NBRC 14942 / NCIMB 11054 / UW101)</name>
    <name type="common">Cytophaga johnsonae</name>
    <dbReference type="NCBI Taxonomy" id="376686"/>
    <lineage>
        <taxon>Bacteria</taxon>
        <taxon>Pseudomonadati</taxon>
        <taxon>Bacteroidota</taxon>
        <taxon>Flavobacteriia</taxon>
        <taxon>Flavobacteriales</taxon>
        <taxon>Flavobacteriaceae</taxon>
        <taxon>Flavobacterium</taxon>
    </lineage>
</organism>
<sequence length="522" mass="59930">MKNLKINNRFTAELPADPDLTNETRQVKNTAFSYVNPTKPSNPKLIHASEETAALVGISKEEIHSEEFLNVFSGKEILPETQPYAMCYAGHQFGNWAGQLGDGRAINLTEVENNNTFYTLQLKGAGKTPYSRTADGLAVLRSSIREYLCAEAMYHLGVPTTRSLSLILSGDQVLRDILYNGNPAYEKGAVVCRVAPSFIRFGSFEMLAARNELKNLKQFVEYTIKHYFPEITGEPKEQYLQFFKKVADTTREMILHWQRVGFVHGVMNTDNMSVHGITIDYGPYGWLENYDPNWTPNTTDSQNKRYRFGNQPQVAHWNLYQLANAIYPLINETEGLEKILESFMDDFILDYKEMFLNKLGLFTSTETDNDLIDNLEAVLQLTETDMTIFFRNLSSVKKTDSVEKAIEKIQFAFYKIEEVSGEILDAWKKWFSVYLDRLNAEVLSDEVRLQKMNLINPKYVLRNYMAQLAIDAADKEDYSLVNELYTLLQKPYDEQPEYQKWFAKRPDWATSKVGCSMLSCSS</sequence>
<comment type="function">
    <text evidence="1">Nucleotidyltransferase involved in the post-translational modification of proteins. It can catalyze the addition of adenosine monophosphate (AMP) or uridine monophosphate (UMP) to a protein, resulting in modifications known as AMPylation and UMPylation.</text>
</comment>
<comment type="catalytic activity">
    <reaction evidence="1">
        <text>L-seryl-[protein] + ATP = 3-O-(5'-adenylyl)-L-seryl-[protein] + diphosphate</text>
        <dbReference type="Rhea" id="RHEA:58120"/>
        <dbReference type="Rhea" id="RHEA-COMP:9863"/>
        <dbReference type="Rhea" id="RHEA-COMP:15073"/>
        <dbReference type="ChEBI" id="CHEBI:29999"/>
        <dbReference type="ChEBI" id="CHEBI:30616"/>
        <dbReference type="ChEBI" id="CHEBI:33019"/>
        <dbReference type="ChEBI" id="CHEBI:142516"/>
        <dbReference type="EC" id="2.7.7.108"/>
    </reaction>
</comment>
<comment type="catalytic activity">
    <reaction evidence="1">
        <text>L-threonyl-[protein] + ATP = 3-O-(5'-adenylyl)-L-threonyl-[protein] + diphosphate</text>
        <dbReference type="Rhea" id="RHEA:54292"/>
        <dbReference type="Rhea" id="RHEA-COMP:11060"/>
        <dbReference type="Rhea" id="RHEA-COMP:13847"/>
        <dbReference type="ChEBI" id="CHEBI:30013"/>
        <dbReference type="ChEBI" id="CHEBI:30616"/>
        <dbReference type="ChEBI" id="CHEBI:33019"/>
        <dbReference type="ChEBI" id="CHEBI:138113"/>
        <dbReference type="EC" id="2.7.7.108"/>
    </reaction>
</comment>
<comment type="catalytic activity">
    <reaction evidence="1">
        <text>L-tyrosyl-[protein] + ATP = O-(5'-adenylyl)-L-tyrosyl-[protein] + diphosphate</text>
        <dbReference type="Rhea" id="RHEA:54288"/>
        <dbReference type="Rhea" id="RHEA-COMP:10136"/>
        <dbReference type="Rhea" id="RHEA-COMP:13846"/>
        <dbReference type="ChEBI" id="CHEBI:30616"/>
        <dbReference type="ChEBI" id="CHEBI:33019"/>
        <dbReference type="ChEBI" id="CHEBI:46858"/>
        <dbReference type="ChEBI" id="CHEBI:83624"/>
        <dbReference type="EC" id="2.7.7.108"/>
    </reaction>
</comment>
<comment type="catalytic activity">
    <reaction evidence="1">
        <text>L-histidyl-[protein] + UTP = N(tele)-(5'-uridylyl)-L-histidyl-[protein] + diphosphate</text>
        <dbReference type="Rhea" id="RHEA:83891"/>
        <dbReference type="Rhea" id="RHEA-COMP:9745"/>
        <dbReference type="Rhea" id="RHEA-COMP:20239"/>
        <dbReference type="ChEBI" id="CHEBI:29979"/>
        <dbReference type="ChEBI" id="CHEBI:33019"/>
        <dbReference type="ChEBI" id="CHEBI:46398"/>
        <dbReference type="ChEBI" id="CHEBI:233474"/>
    </reaction>
</comment>
<comment type="catalytic activity">
    <reaction evidence="1">
        <text>L-seryl-[protein] + UTP = O-(5'-uridylyl)-L-seryl-[protein] + diphosphate</text>
        <dbReference type="Rhea" id="RHEA:64604"/>
        <dbReference type="Rhea" id="RHEA-COMP:9863"/>
        <dbReference type="Rhea" id="RHEA-COMP:16635"/>
        <dbReference type="ChEBI" id="CHEBI:29999"/>
        <dbReference type="ChEBI" id="CHEBI:33019"/>
        <dbReference type="ChEBI" id="CHEBI:46398"/>
        <dbReference type="ChEBI" id="CHEBI:156051"/>
    </reaction>
</comment>
<comment type="catalytic activity">
    <reaction evidence="1">
        <text>L-tyrosyl-[protein] + UTP = O-(5'-uridylyl)-L-tyrosyl-[protein] + diphosphate</text>
        <dbReference type="Rhea" id="RHEA:83887"/>
        <dbReference type="Rhea" id="RHEA-COMP:10136"/>
        <dbReference type="Rhea" id="RHEA-COMP:20238"/>
        <dbReference type="ChEBI" id="CHEBI:33019"/>
        <dbReference type="ChEBI" id="CHEBI:46398"/>
        <dbReference type="ChEBI" id="CHEBI:46858"/>
        <dbReference type="ChEBI" id="CHEBI:90602"/>
    </reaction>
</comment>
<comment type="cofactor">
    <cofactor evidence="1">
        <name>Mg(2+)</name>
        <dbReference type="ChEBI" id="CHEBI:18420"/>
    </cofactor>
    <cofactor evidence="1">
        <name>Mn(2+)</name>
        <dbReference type="ChEBI" id="CHEBI:29035"/>
    </cofactor>
</comment>
<comment type="similarity">
    <text evidence="1">Belongs to the SELO family.</text>
</comment>
<protein>
    <recommendedName>
        <fullName evidence="1">Protein nucleotidyltransferase YdiU</fullName>
        <ecNumber evidence="1">2.7.7.-</ecNumber>
    </recommendedName>
    <alternativeName>
        <fullName evidence="1">Protein adenylyltransferase YdiU</fullName>
        <ecNumber evidence="1">2.7.7.108</ecNumber>
    </alternativeName>
    <alternativeName>
        <fullName evidence="1">Protein uridylyltransferase YdiU</fullName>
        <ecNumber evidence="1">2.7.7.-</ecNumber>
    </alternativeName>
</protein>
<keyword id="KW-0067">ATP-binding</keyword>
<keyword id="KW-0460">Magnesium</keyword>
<keyword id="KW-0464">Manganese</keyword>
<keyword id="KW-0479">Metal-binding</keyword>
<keyword id="KW-0547">Nucleotide-binding</keyword>
<keyword id="KW-0548">Nucleotidyltransferase</keyword>
<keyword id="KW-0808">Transferase</keyword>
<proteinExistence type="inferred from homology"/>
<dbReference type="EC" id="2.7.7.-" evidence="1"/>
<dbReference type="EC" id="2.7.7.108" evidence="1"/>
<dbReference type="EMBL" id="CP000685">
    <property type="protein sequence ID" value="ABQ05815.1"/>
    <property type="molecule type" value="Genomic_DNA"/>
</dbReference>
<dbReference type="RefSeq" id="WP_012024854.1">
    <property type="nucleotide sequence ID" value="NC_009441.1"/>
</dbReference>
<dbReference type="SMR" id="A5FG48"/>
<dbReference type="STRING" id="376686.Fjoh_2793"/>
<dbReference type="KEGG" id="fjo:Fjoh_2793"/>
<dbReference type="eggNOG" id="COG0397">
    <property type="taxonomic scope" value="Bacteria"/>
</dbReference>
<dbReference type="HOGENOM" id="CLU_010245_4_0_10"/>
<dbReference type="OrthoDB" id="9773505at2"/>
<dbReference type="Proteomes" id="UP000006694">
    <property type="component" value="Chromosome"/>
</dbReference>
<dbReference type="GO" id="GO:0070733">
    <property type="term" value="F:AMPylase activity"/>
    <property type="evidence" value="ECO:0007669"/>
    <property type="project" value="TreeGrafter"/>
</dbReference>
<dbReference type="GO" id="GO:0005524">
    <property type="term" value="F:ATP binding"/>
    <property type="evidence" value="ECO:0007669"/>
    <property type="project" value="UniProtKB-UniRule"/>
</dbReference>
<dbReference type="GO" id="GO:0000287">
    <property type="term" value="F:magnesium ion binding"/>
    <property type="evidence" value="ECO:0007669"/>
    <property type="project" value="UniProtKB-UniRule"/>
</dbReference>
<dbReference type="HAMAP" id="MF_00692">
    <property type="entry name" value="YdiU_SelO"/>
    <property type="match status" value="1"/>
</dbReference>
<dbReference type="InterPro" id="IPR003846">
    <property type="entry name" value="SelO"/>
</dbReference>
<dbReference type="NCBIfam" id="NF000658">
    <property type="entry name" value="PRK00029.1"/>
    <property type="match status" value="1"/>
</dbReference>
<dbReference type="PANTHER" id="PTHR32057">
    <property type="entry name" value="PROTEIN ADENYLYLTRANSFERASE SELO, MITOCHONDRIAL"/>
    <property type="match status" value="1"/>
</dbReference>
<dbReference type="PANTHER" id="PTHR32057:SF14">
    <property type="entry name" value="PROTEIN ADENYLYLTRANSFERASE SELO, MITOCHONDRIAL"/>
    <property type="match status" value="1"/>
</dbReference>
<dbReference type="Pfam" id="PF02696">
    <property type="entry name" value="SelO"/>
    <property type="match status" value="1"/>
</dbReference>
<reference key="1">
    <citation type="journal article" date="2009" name="Appl. Environ. Microbiol.">
        <title>Novel features of the polysaccharide-digesting gliding bacterium Flavobacterium johnsoniae as revealed by genome sequence analysis.</title>
        <authorList>
            <person name="McBride M.J."/>
            <person name="Xie G."/>
            <person name="Martens E.C."/>
            <person name="Lapidus A."/>
            <person name="Henrissat B."/>
            <person name="Rhodes R.G."/>
            <person name="Goltsman E."/>
            <person name="Wang W."/>
            <person name="Xu J."/>
            <person name="Hunnicutt D.W."/>
            <person name="Staroscik A.M."/>
            <person name="Hoover T.R."/>
            <person name="Cheng Y.Q."/>
            <person name="Stein J.L."/>
        </authorList>
    </citation>
    <scope>NUCLEOTIDE SEQUENCE [LARGE SCALE GENOMIC DNA]</scope>
    <source>
        <strain>ATCC 17061 / DSM 2064 / JCM 8514 / BCRC 14874 / CCUG 350202 / NBRC 14942 / NCIMB 11054 / UW101</strain>
    </source>
</reference>